<organism>
    <name type="scientific">Carassius auratus</name>
    <name type="common">Goldfish</name>
    <dbReference type="NCBI Taxonomy" id="7957"/>
    <lineage>
        <taxon>Eukaryota</taxon>
        <taxon>Metazoa</taxon>
        <taxon>Chordata</taxon>
        <taxon>Craniata</taxon>
        <taxon>Vertebrata</taxon>
        <taxon>Euteleostomi</taxon>
        <taxon>Actinopterygii</taxon>
        <taxon>Neopterygii</taxon>
        <taxon>Teleostei</taxon>
        <taxon>Ostariophysi</taxon>
        <taxon>Cypriniformes</taxon>
        <taxon>Cyprinidae</taxon>
        <taxon>Cyprininae</taxon>
        <taxon>Carassius</taxon>
    </lineage>
</organism>
<keyword id="KW-0175">Coiled coil</keyword>
<keyword id="KW-0403">Intermediate filament</keyword>
<keyword id="KW-1185">Reference proteome</keyword>
<proteinExistence type="evidence at transcript level"/>
<evidence type="ECO:0000255" key="1">
    <source>
        <dbReference type="PROSITE-ProRule" id="PRU01188"/>
    </source>
</evidence>
<evidence type="ECO:0000256" key="2">
    <source>
        <dbReference type="SAM" id="MobiDB-lite"/>
    </source>
</evidence>
<reference key="1">
    <citation type="journal article" date="1992" name="Neuron">
        <title>Plasticin, a novel type III neurofilament protein from goldfish retina: increased expression during optic nerve regeneration.</title>
        <authorList>
            <person name="Glasgow E."/>
            <person name="Druger R.K."/>
            <person name="Levine E.M."/>
            <person name="Fuchs C."/>
            <person name="Schechter N."/>
        </authorList>
    </citation>
    <scope>NUCLEOTIDE SEQUENCE [MRNA]</scope>
    <source>
        <tissue>Retina</tissue>
    </source>
</reference>
<comment type="function">
    <text>Type III neurofilament.</text>
</comment>
<comment type="tissue specificity">
    <text>Optic nerve.</text>
</comment>
<comment type="developmental stage">
    <text>Increased expression during optic nerve regeneration.</text>
</comment>
<comment type="similarity">
    <text evidence="1">Belongs to the intermediate filament family.</text>
</comment>
<sequence length="453" mass="52635">MSHSTFSHLFSPHFGAPVYSPVSSRIGGRYVSSSVPTRSVDFRSRSSAPAPRLSYDKVDFSSAEAINQEFFATRSNEKRELQELNDRFASFIEKVRHLEQQNSKLILELGQYKDQHQGSTGRINELCQQEMRELRRQLELMAKDRDQMQVERDNLAEDVALLNQRLNEEMGKRQEAENNLTLFRKDVDDATLARLELERKIESLMDEIEFLKKMHDEEIQDVQVSVQSQQMKMEVMETSSRPDLTGALRDIRAQYESIATKNMQESEEWYKSKFADLTDSAKRNAEAMRQGKQENNDLRRQIQAQNCDIDSLKRTNEALLRQMREMEEQFAAEARNYQDTVSRLEDEIRNLKEEMSRHLREYQDLLNVKMALDIEIATYRKLLEGEENRIVVPIMKMPSMSGYSGDYGQFSDTRAGQKVVIKTVETRDGEVVKESTKEKGRDEKKDSHGQGKD</sequence>
<dbReference type="EMBL" id="M90532">
    <property type="protein sequence ID" value="AAA49187.1"/>
    <property type="molecule type" value="mRNA"/>
</dbReference>
<dbReference type="PIR" id="JH0696">
    <property type="entry name" value="JH0696"/>
</dbReference>
<dbReference type="SMR" id="P31393"/>
<dbReference type="Proteomes" id="UP000515129">
    <property type="component" value="Unplaced"/>
</dbReference>
<dbReference type="GO" id="GO:0030424">
    <property type="term" value="C:axon"/>
    <property type="evidence" value="ECO:0007669"/>
    <property type="project" value="TreeGrafter"/>
</dbReference>
<dbReference type="GO" id="GO:0005737">
    <property type="term" value="C:cytoplasm"/>
    <property type="evidence" value="ECO:0007669"/>
    <property type="project" value="TreeGrafter"/>
</dbReference>
<dbReference type="GO" id="GO:0005886">
    <property type="term" value="C:plasma membrane"/>
    <property type="evidence" value="ECO:0007669"/>
    <property type="project" value="TreeGrafter"/>
</dbReference>
<dbReference type="GO" id="GO:0045098">
    <property type="term" value="C:type III intermediate filament"/>
    <property type="evidence" value="ECO:0007669"/>
    <property type="project" value="TreeGrafter"/>
</dbReference>
<dbReference type="GO" id="GO:0005200">
    <property type="term" value="F:structural constituent of cytoskeleton"/>
    <property type="evidence" value="ECO:0007669"/>
    <property type="project" value="TreeGrafter"/>
</dbReference>
<dbReference type="GO" id="GO:0045109">
    <property type="term" value="P:intermediate filament organization"/>
    <property type="evidence" value="ECO:0007669"/>
    <property type="project" value="TreeGrafter"/>
</dbReference>
<dbReference type="FunFam" id="1.20.5.1160:FF:000001">
    <property type="entry name" value="Keratin type II"/>
    <property type="match status" value="1"/>
</dbReference>
<dbReference type="FunFam" id="1.20.5.170:FF:000002">
    <property type="entry name" value="Type I keratin KA11"/>
    <property type="match status" value="1"/>
</dbReference>
<dbReference type="FunFam" id="1.20.5.500:FF:000001">
    <property type="entry name" value="Type II keratin 23"/>
    <property type="match status" value="1"/>
</dbReference>
<dbReference type="Gene3D" id="1.20.5.170">
    <property type="match status" value="1"/>
</dbReference>
<dbReference type="Gene3D" id="1.20.5.500">
    <property type="entry name" value="Single helix bin"/>
    <property type="match status" value="1"/>
</dbReference>
<dbReference type="Gene3D" id="1.20.5.1160">
    <property type="entry name" value="Vasodilator-stimulated phosphoprotein"/>
    <property type="match status" value="1"/>
</dbReference>
<dbReference type="InterPro" id="IPR018039">
    <property type="entry name" value="IF_conserved"/>
</dbReference>
<dbReference type="InterPro" id="IPR039008">
    <property type="entry name" value="IF_rod_dom"/>
</dbReference>
<dbReference type="InterPro" id="IPR006821">
    <property type="entry name" value="Intermed_filament_DNA-bd"/>
</dbReference>
<dbReference type="InterPro" id="IPR050405">
    <property type="entry name" value="Intermediate_filament"/>
</dbReference>
<dbReference type="InterPro" id="IPR002957">
    <property type="entry name" value="Keratin_I"/>
</dbReference>
<dbReference type="PANTHER" id="PTHR45652">
    <property type="entry name" value="GLIAL FIBRILLARY ACIDIC PROTEIN"/>
    <property type="match status" value="1"/>
</dbReference>
<dbReference type="PANTHER" id="PTHR45652:SF14">
    <property type="entry name" value="PERIPHERIN"/>
    <property type="match status" value="1"/>
</dbReference>
<dbReference type="Pfam" id="PF00038">
    <property type="entry name" value="Filament"/>
    <property type="match status" value="1"/>
</dbReference>
<dbReference type="Pfam" id="PF04732">
    <property type="entry name" value="Filament_head"/>
    <property type="match status" value="1"/>
</dbReference>
<dbReference type="PRINTS" id="PR01248">
    <property type="entry name" value="TYPE1KERATIN"/>
</dbReference>
<dbReference type="SMART" id="SM01391">
    <property type="entry name" value="Filament"/>
    <property type="match status" value="1"/>
</dbReference>
<dbReference type="SUPFAM" id="SSF64593">
    <property type="entry name" value="Intermediate filament protein, coiled coil region"/>
    <property type="match status" value="2"/>
</dbReference>
<dbReference type="PROSITE" id="PS00226">
    <property type="entry name" value="IF_ROD_1"/>
    <property type="match status" value="1"/>
</dbReference>
<dbReference type="PROSITE" id="PS51842">
    <property type="entry name" value="IF_ROD_2"/>
    <property type="match status" value="1"/>
</dbReference>
<protein>
    <recommendedName>
        <fullName>Plasticin</fullName>
    </recommendedName>
</protein>
<feature type="chain" id="PRO_0000063857" description="Plasticin">
    <location>
        <begin position="1"/>
        <end position="453"/>
    </location>
</feature>
<feature type="domain" description="IF rod" evidence="1">
    <location>
        <begin position="77"/>
        <end position="390"/>
    </location>
</feature>
<feature type="region of interest" description="Head">
    <location>
        <begin position="1"/>
        <end position="51"/>
    </location>
</feature>
<feature type="region of interest" description="Coil 1A">
    <location>
        <begin position="71"/>
        <end position="112"/>
    </location>
</feature>
<feature type="region of interest" description="Linker 1">
    <location>
        <begin position="113"/>
        <end position="126"/>
    </location>
</feature>
<feature type="region of interest" description="Coil 1B">
    <location>
        <begin position="127"/>
        <end position="222"/>
    </location>
</feature>
<feature type="region of interest" description="Linker 12">
    <location>
        <begin position="223"/>
        <end position="245"/>
    </location>
</feature>
<feature type="region of interest" description="Coil 2">
    <location>
        <begin position="246"/>
        <end position="391"/>
    </location>
</feature>
<feature type="region of interest" description="Tail">
    <location>
        <begin position="392"/>
        <end position="453"/>
    </location>
</feature>
<feature type="region of interest" description="Disordered" evidence="2">
    <location>
        <begin position="421"/>
        <end position="453"/>
    </location>
</feature>
<feature type="compositionally biased region" description="Basic and acidic residues" evidence="2">
    <location>
        <begin position="424"/>
        <end position="453"/>
    </location>
</feature>
<accession>P31393</accession>
<name>PLST_CARAU</name>